<accession>A4XVB4</accession>
<gene>
    <name evidence="1" type="primary">htpX</name>
    <name type="ordered locus">Pmen_2524</name>
</gene>
<keyword id="KW-0997">Cell inner membrane</keyword>
<keyword id="KW-1003">Cell membrane</keyword>
<keyword id="KW-0378">Hydrolase</keyword>
<keyword id="KW-0472">Membrane</keyword>
<keyword id="KW-0479">Metal-binding</keyword>
<keyword id="KW-0482">Metalloprotease</keyword>
<keyword id="KW-0645">Protease</keyword>
<keyword id="KW-0812">Transmembrane</keyword>
<keyword id="KW-1133">Transmembrane helix</keyword>
<keyword id="KW-0862">Zinc</keyword>
<dbReference type="EC" id="3.4.24.-" evidence="1"/>
<dbReference type="EMBL" id="CP000680">
    <property type="protein sequence ID" value="ABP85280.1"/>
    <property type="molecule type" value="Genomic_DNA"/>
</dbReference>
<dbReference type="SMR" id="A4XVB4"/>
<dbReference type="STRING" id="399739.Pmen_2524"/>
<dbReference type="MEROPS" id="M48.002"/>
<dbReference type="KEGG" id="pmy:Pmen_2524"/>
<dbReference type="PATRIC" id="fig|399739.8.peg.2550"/>
<dbReference type="eggNOG" id="COG0501">
    <property type="taxonomic scope" value="Bacteria"/>
</dbReference>
<dbReference type="HOGENOM" id="CLU_042266_1_0_6"/>
<dbReference type="OrthoDB" id="15218at2"/>
<dbReference type="GO" id="GO:0005886">
    <property type="term" value="C:plasma membrane"/>
    <property type="evidence" value="ECO:0007669"/>
    <property type="project" value="UniProtKB-SubCell"/>
</dbReference>
<dbReference type="GO" id="GO:0004222">
    <property type="term" value="F:metalloendopeptidase activity"/>
    <property type="evidence" value="ECO:0007669"/>
    <property type="project" value="UniProtKB-UniRule"/>
</dbReference>
<dbReference type="GO" id="GO:0008270">
    <property type="term" value="F:zinc ion binding"/>
    <property type="evidence" value="ECO:0007669"/>
    <property type="project" value="UniProtKB-UniRule"/>
</dbReference>
<dbReference type="GO" id="GO:0006508">
    <property type="term" value="P:proteolysis"/>
    <property type="evidence" value="ECO:0007669"/>
    <property type="project" value="UniProtKB-KW"/>
</dbReference>
<dbReference type="CDD" id="cd07335">
    <property type="entry name" value="M48B_HtpX_like"/>
    <property type="match status" value="1"/>
</dbReference>
<dbReference type="Gene3D" id="3.30.2010.10">
    <property type="entry name" value="Metalloproteases ('zincins'), catalytic domain"/>
    <property type="match status" value="1"/>
</dbReference>
<dbReference type="HAMAP" id="MF_00188">
    <property type="entry name" value="Pept_M48_protease_HtpX"/>
    <property type="match status" value="1"/>
</dbReference>
<dbReference type="InterPro" id="IPR050083">
    <property type="entry name" value="HtpX_protease"/>
</dbReference>
<dbReference type="InterPro" id="IPR022919">
    <property type="entry name" value="Pept_M48_protease_HtpX"/>
</dbReference>
<dbReference type="InterPro" id="IPR001915">
    <property type="entry name" value="Peptidase_M48"/>
</dbReference>
<dbReference type="NCBIfam" id="NF003965">
    <property type="entry name" value="PRK05457.1"/>
    <property type="match status" value="1"/>
</dbReference>
<dbReference type="PANTHER" id="PTHR43221">
    <property type="entry name" value="PROTEASE HTPX"/>
    <property type="match status" value="1"/>
</dbReference>
<dbReference type="PANTHER" id="PTHR43221:SF1">
    <property type="entry name" value="PROTEASE HTPX"/>
    <property type="match status" value="1"/>
</dbReference>
<dbReference type="Pfam" id="PF01435">
    <property type="entry name" value="Peptidase_M48"/>
    <property type="match status" value="1"/>
</dbReference>
<organism>
    <name type="scientific">Ectopseudomonas mendocina (strain ymp)</name>
    <name type="common">Pseudomonas mendocina</name>
    <dbReference type="NCBI Taxonomy" id="399739"/>
    <lineage>
        <taxon>Bacteria</taxon>
        <taxon>Pseudomonadati</taxon>
        <taxon>Pseudomonadota</taxon>
        <taxon>Gammaproteobacteria</taxon>
        <taxon>Pseudomonadales</taxon>
        <taxon>Pseudomonadaceae</taxon>
        <taxon>Ectopseudomonas</taxon>
    </lineage>
</organism>
<comment type="cofactor">
    <cofactor evidence="1">
        <name>Zn(2+)</name>
        <dbReference type="ChEBI" id="CHEBI:29105"/>
    </cofactor>
    <text evidence="1">Binds 1 zinc ion per subunit.</text>
</comment>
<comment type="subcellular location">
    <subcellularLocation>
        <location evidence="1">Cell inner membrane</location>
        <topology evidence="1">Multi-pass membrane protein</topology>
    </subcellularLocation>
</comment>
<comment type="similarity">
    <text evidence="1">Belongs to the peptidase M48B family.</text>
</comment>
<protein>
    <recommendedName>
        <fullName evidence="1">Protease HtpX</fullName>
        <ecNumber evidence="1">3.4.24.-</ecNumber>
    </recommendedName>
    <alternativeName>
        <fullName evidence="1">Heat shock protein HtpX</fullName>
    </alternativeName>
</protein>
<sequence length="290" mass="31655">MMRIMLFLATNLAVLIIASITLKLLGVDRFTGQNHGSLLIFCAVFGFAGSLVSLFISKWMAKMSTGTQIITQPRTRHEQWLLQTVEELSREAGIKMPEVGIFPAYESNAFATGWNKNDALVAVSQGLLERFSPDEVRAVLAHEIGHVANGDMVTLALIQGVVNTFVMFFARIFGSFVDKAIFKNEDGHGIGYFIATIFAELVLGILASIIVMWFSRKREFKADEAGARLAGTGAMIAALQRLRAEQGVPVQMPDSLTAFGINGGLKNGLAGLLMTHPPLEDRIEALRRLG</sequence>
<reference key="1">
    <citation type="submission" date="2007-04" db="EMBL/GenBank/DDBJ databases">
        <title>Complete sequence of Pseudomonas mendocina ymp.</title>
        <authorList>
            <consortium name="US DOE Joint Genome Institute"/>
            <person name="Copeland A."/>
            <person name="Lucas S."/>
            <person name="Lapidus A."/>
            <person name="Barry K."/>
            <person name="Glavina del Rio T."/>
            <person name="Dalin E."/>
            <person name="Tice H."/>
            <person name="Pitluck S."/>
            <person name="Kiss H."/>
            <person name="Brettin T."/>
            <person name="Detter J.C."/>
            <person name="Bruce D."/>
            <person name="Han C."/>
            <person name="Schmutz J."/>
            <person name="Larimer F."/>
            <person name="Land M."/>
            <person name="Hauser L."/>
            <person name="Kyrpides N."/>
            <person name="Mikhailova N."/>
            <person name="Hersman L."/>
            <person name="Dubois J."/>
            <person name="Maurice P."/>
            <person name="Richardson P."/>
        </authorList>
    </citation>
    <scope>NUCLEOTIDE SEQUENCE [LARGE SCALE GENOMIC DNA]</scope>
    <source>
        <strain>ymp</strain>
    </source>
</reference>
<proteinExistence type="inferred from homology"/>
<evidence type="ECO:0000255" key="1">
    <source>
        <dbReference type="HAMAP-Rule" id="MF_00188"/>
    </source>
</evidence>
<feature type="chain" id="PRO_1000058467" description="Protease HtpX">
    <location>
        <begin position="1"/>
        <end position="290"/>
    </location>
</feature>
<feature type="transmembrane region" description="Helical" evidence="1">
    <location>
        <begin position="4"/>
        <end position="24"/>
    </location>
</feature>
<feature type="transmembrane region" description="Helical" evidence="1">
    <location>
        <begin position="36"/>
        <end position="56"/>
    </location>
</feature>
<feature type="transmembrane region" description="Helical" evidence="1">
    <location>
        <begin position="150"/>
        <end position="170"/>
    </location>
</feature>
<feature type="transmembrane region" description="Helical" evidence="1">
    <location>
        <begin position="193"/>
        <end position="213"/>
    </location>
</feature>
<feature type="active site" evidence="1">
    <location>
        <position position="143"/>
    </location>
</feature>
<feature type="binding site" evidence="1">
    <location>
        <position position="142"/>
    </location>
    <ligand>
        <name>Zn(2+)</name>
        <dbReference type="ChEBI" id="CHEBI:29105"/>
        <note>catalytic</note>
    </ligand>
</feature>
<feature type="binding site" evidence="1">
    <location>
        <position position="146"/>
    </location>
    <ligand>
        <name>Zn(2+)</name>
        <dbReference type="ChEBI" id="CHEBI:29105"/>
        <note>catalytic</note>
    </ligand>
</feature>
<feature type="binding site" evidence="1">
    <location>
        <position position="219"/>
    </location>
    <ligand>
        <name>Zn(2+)</name>
        <dbReference type="ChEBI" id="CHEBI:29105"/>
        <note>catalytic</note>
    </ligand>
</feature>
<name>HTPX_ECTM1</name>